<dbReference type="EMBL" id="AF338769">
    <property type="protein sequence ID" value="AAK31319.1"/>
    <property type="molecule type" value="mRNA"/>
</dbReference>
<dbReference type="EMBL" id="AC009176">
    <property type="protein sequence ID" value="AAF13092.1"/>
    <property type="status" value="ALT_SEQ"/>
    <property type="molecule type" value="Genomic_DNA"/>
</dbReference>
<dbReference type="EMBL" id="AC013483">
    <property type="protein sequence ID" value="AAF21184.1"/>
    <property type="molecule type" value="Genomic_DNA"/>
</dbReference>
<dbReference type="EMBL" id="CP002686">
    <property type="protein sequence ID" value="AEE74594.1"/>
    <property type="molecule type" value="Genomic_DNA"/>
</dbReference>
<dbReference type="EMBL" id="CP002686">
    <property type="protein sequence ID" value="AEE74595.1"/>
    <property type="molecule type" value="Genomic_DNA"/>
</dbReference>
<dbReference type="EMBL" id="AY040045">
    <property type="protein sequence ID" value="AAK64103.1"/>
    <property type="molecule type" value="mRNA"/>
</dbReference>
<dbReference type="EMBL" id="AF360246">
    <property type="protein sequence ID" value="AAK25956.1"/>
    <property type="molecule type" value="mRNA"/>
</dbReference>
<dbReference type="EMBL" id="BX824819">
    <property type="status" value="NOT_ANNOTATED_CDS"/>
    <property type="molecule type" value="mRNA"/>
</dbReference>
<dbReference type="EMBL" id="DR751137">
    <property type="status" value="NOT_ANNOTATED_CDS"/>
    <property type="molecule type" value="mRNA"/>
</dbReference>
<dbReference type="EMBL" id="DR751119">
    <property type="status" value="NOT_ANNOTATED_CDS"/>
    <property type="molecule type" value="mRNA"/>
</dbReference>
<dbReference type="RefSeq" id="NP_001078122.2">
    <property type="nucleotide sequence ID" value="NM_001084653.2"/>
</dbReference>
<dbReference type="RefSeq" id="NP_566317.1">
    <molecule id="Q9SFD5-1"/>
    <property type="nucleotide sequence ID" value="NM_111653.2"/>
</dbReference>
<dbReference type="RefSeq" id="NP_974251.1">
    <molecule id="Q9SFD5-2"/>
    <property type="nucleotide sequence ID" value="NM_202522.1"/>
</dbReference>
<dbReference type="SMR" id="Q9SFD5"/>
<dbReference type="BioGRID" id="5300">
    <property type="interactions" value="35"/>
</dbReference>
<dbReference type="FunCoup" id="Q9SFD5">
    <property type="interactions" value="3926"/>
</dbReference>
<dbReference type="IntAct" id="Q9SFD5">
    <property type="interactions" value="31"/>
</dbReference>
<dbReference type="STRING" id="3702.Q9SFD5"/>
<dbReference type="iPTMnet" id="Q9SFD5"/>
<dbReference type="PaxDb" id="3702-AT3G07740.4"/>
<dbReference type="ProteomicsDB" id="245280">
    <molecule id="Q9SFD5-1"/>
</dbReference>
<dbReference type="EnsemblPlants" id="AT3G07740.1">
    <molecule id="Q9SFD5-1"/>
    <property type="protein sequence ID" value="AT3G07740.1"/>
    <property type="gene ID" value="AT3G07740"/>
</dbReference>
<dbReference type="EnsemblPlants" id="AT3G07740.2">
    <molecule id="Q9SFD5-2"/>
    <property type="protein sequence ID" value="AT3G07740.2"/>
    <property type="gene ID" value="AT3G07740"/>
</dbReference>
<dbReference type="GeneID" id="819965"/>
<dbReference type="Gramene" id="AT3G07740.1">
    <molecule id="Q9SFD5-1"/>
    <property type="protein sequence ID" value="AT3G07740.1"/>
    <property type="gene ID" value="AT3G07740"/>
</dbReference>
<dbReference type="Gramene" id="AT3G07740.2">
    <molecule id="Q9SFD5-2"/>
    <property type="protein sequence ID" value="AT3G07740.2"/>
    <property type="gene ID" value="AT3G07740"/>
</dbReference>
<dbReference type="KEGG" id="ath:AT3G07740"/>
<dbReference type="Araport" id="AT3G07740"/>
<dbReference type="TAIR" id="AT3G07740">
    <property type="gene designation" value="ADA2A"/>
</dbReference>
<dbReference type="eggNOG" id="KOG0457">
    <property type="taxonomic scope" value="Eukaryota"/>
</dbReference>
<dbReference type="InParanoid" id="Q9SFD5"/>
<dbReference type="OrthoDB" id="270417at2759"/>
<dbReference type="PhylomeDB" id="Q9SFD5"/>
<dbReference type="PRO" id="PR:Q9SFD5"/>
<dbReference type="Proteomes" id="UP000006548">
    <property type="component" value="Chromosome 3"/>
</dbReference>
<dbReference type="ExpressionAtlas" id="Q9SFD5">
    <property type="expression patterns" value="baseline and differential"/>
</dbReference>
<dbReference type="GO" id="GO:0005634">
    <property type="term" value="C:nucleus"/>
    <property type="evidence" value="ECO:0007669"/>
    <property type="project" value="UniProtKB-SubCell"/>
</dbReference>
<dbReference type="GO" id="GO:0003677">
    <property type="term" value="F:DNA binding"/>
    <property type="evidence" value="ECO:0007669"/>
    <property type="project" value="UniProtKB-KW"/>
</dbReference>
<dbReference type="GO" id="GO:0003713">
    <property type="term" value="F:transcription coactivator activity"/>
    <property type="evidence" value="ECO:0007669"/>
    <property type="project" value="InterPro"/>
</dbReference>
<dbReference type="GO" id="GO:0008270">
    <property type="term" value="F:zinc ion binding"/>
    <property type="evidence" value="ECO:0007669"/>
    <property type="project" value="UniProtKB-KW"/>
</dbReference>
<dbReference type="GO" id="GO:0006357">
    <property type="term" value="P:regulation of transcription by RNA polymerase II"/>
    <property type="evidence" value="ECO:0007669"/>
    <property type="project" value="InterPro"/>
</dbReference>
<dbReference type="CDD" id="cd00167">
    <property type="entry name" value="SANT"/>
    <property type="match status" value="1"/>
</dbReference>
<dbReference type="CDD" id="cd02335">
    <property type="entry name" value="ZZ_ADA2"/>
    <property type="match status" value="1"/>
</dbReference>
<dbReference type="FunFam" id="1.10.10.10:FF:000087">
    <property type="entry name" value="Transcriptional adapter 2"/>
    <property type="match status" value="1"/>
</dbReference>
<dbReference type="FunFam" id="1.10.10.60:FF:000115">
    <property type="entry name" value="Transcriptional adapter 2"/>
    <property type="match status" value="1"/>
</dbReference>
<dbReference type="Gene3D" id="3.30.60.90">
    <property type="match status" value="1"/>
</dbReference>
<dbReference type="Gene3D" id="1.10.10.60">
    <property type="entry name" value="Homeodomain-like"/>
    <property type="match status" value="1"/>
</dbReference>
<dbReference type="Gene3D" id="1.10.10.10">
    <property type="entry name" value="Winged helix-like DNA-binding domain superfamily/Winged helix DNA-binding domain"/>
    <property type="match status" value="1"/>
</dbReference>
<dbReference type="InterPro" id="IPR041983">
    <property type="entry name" value="ADA2-like_ZZ"/>
</dbReference>
<dbReference type="InterPro" id="IPR016827">
    <property type="entry name" value="Ada2/TADA2"/>
</dbReference>
<dbReference type="InterPro" id="IPR009057">
    <property type="entry name" value="Homeodomain-like_sf"/>
</dbReference>
<dbReference type="InterPro" id="IPR017930">
    <property type="entry name" value="Myb_dom"/>
</dbReference>
<dbReference type="InterPro" id="IPR001005">
    <property type="entry name" value="SANT/Myb"/>
</dbReference>
<dbReference type="InterPro" id="IPR017884">
    <property type="entry name" value="SANT_dom"/>
</dbReference>
<dbReference type="InterPro" id="IPR007526">
    <property type="entry name" value="SWIRM"/>
</dbReference>
<dbReference type="InterPro" id="IPR055141">
    <property type="entry name" value="TADA2A_B-like_dom"/>
</dbReference>
<dbReference type="InterPro" id="IPR036388">
    <property type="entry name" value="WH-like_DNA-bd_sf"/>
</dbReference>
<dbReference type="InterPro" id="IPR000433">
    <property type="entry name" value="Znf_ZZ"/>
</dbReference>
<dbReference type="InterPro" id="IPR043145">
    <property type="entry name" value="Znf_ZZ_sf"/>
</dbReference>
<dbReference type="PANTHER" id="PTHR12374:SF20">
    <property type="entry name" value="TRANSCRIPTIONAL ADAPTER 2-ALPHA"/>
    <property type="match status" value="1"/>
</dbReference>
<dbReference type="PANTHER" id="PTHR12374">
    <property type="entry name" value="TRANSCRIPTIONAL ADAPTOR 2 ADA2 -RELATED"/>
    <property type="match status" value="1"/>
</dbReference>
<dbReference type="Pfam" id="PF00249">
    <property type="entry name" value="Myb_DNA-binding"/>
    <property type="match status" value="1"/>
</dbReference>
<dbReference type="Pfam" id="PF22941">
    <property type="entry name" value="TADA2A-like_3rd"/>
    <property type="match status" value="1"/>
</dbReference>
<dbReference type="Pfam" id="PF25299">
    <property type="entry name" value="ZZ_ADA2"/>
    <property type="match status" value="1"/>
</dbReference>
<dbReference type="PIRSF" id="PIRSF025024">
    <property type="entry name" value="Transcriptional_adaptor_2"/>
    <property type="match status" value="1"/>
</dbReference>
<dbReference type="SMART" id="SM00717">
    <property type="entry name" value="SANT"/>
    <property type="match status" value="1"/>
</dbReference>
<dbReference type="SMART" id="SM00291">
    <property type="entry name" value="ZnF_ZZ"/>
    <property type="match status" value="1"/>
</dbReference>
<dbReference type="SUPFAM" id="SSF46689">
    <property type="entry name" value="Homeodomain-like"/>
    <property type="match status" value="2"/>
</dbReference>
<dbReference type="SUPFAM" id="SSF57850">
    <property type="entry name" value="RING/U-box"/>
    <property type="match status" value="1"/>
</dbReference>
<dbReference type="PROSITE" id="PS51293">
    <property type="entry name" value="SANT"/>
    <property type="match status" value="1"/>
</dbReference>
<dbReference type="PROSITE" id="PS50934">
    <property type="entry name" value="SWIRM"/>
    <property type="match status" value="1"/>
</dbReference>
<dbReference type="PROSITE" id="PS01357">
    <property type="entry name" value="ZF_ZZ_1"/>
    <property type="match status" value="1"/>
</dbReference>
<dbReference type="PROSITE" id="PS50135">
    <property type="entry name" value="ZF_ZZ_2"/>
    <property type="match status" value="1"/>
</dbReference>
<sequence length="548" mass="62042">MGRSKLASRPAEEDLNPGKSKRKKISLGPENAAASISTGIEAGNERKPGLYCCNYCDKDLSGLVRFKCAVCMDFDLCVECFSVGVELNRHKNSHPYRVMDNLSFSLVTSDWNADEEILLLEAIATYGFGNWKEVADHVGSKTTTECIKHFNSAYMQSPCFPLPDLSHTIGKSKDELLAMSKDSAVKTEIPAFVRLSPKEELPVSAEIKHEASGKVNEIDPPLSALAGVKKKGNVPQAKDIIKLEAAKQQSDRSVGEKKLRLPGEKVPLVTELYGYNLKREEFEIEHDNDAEQLLADMEFKDSDTDAEREQKLQVLRIYSKRLDERKRRKEFVLERNLLYPDQYEMSLSAEERKIYKSCKVFARFQSKEEHKELIKKVIEEHQILRRIEDLQEARTAGCRTTSDANRFIEEKRKKEAEESMLLRLNHGAPGSIAGKTLKSPRGLPRNLHPFGSDSLPKVTPPRIYSGLDTWDVDGLLGADLLSETEKKMCNETRILPVHYLKMLDILTREIKKGQIKKKSDAYSFFKVEPSKVDRVYDMLVHKGIGDST</sequence>
<name>TAD2A_ARATH</name>
<reference key="1">
    <citation type="journal article" date="2001" name="Nucleic Acids Res.">
        <title>Transcriptional adaptor and histone acetyltransferase proteins in Arabidopsis and their interactions with CBF1, a transcriptional activator involved in cold-regulated gene expression.</title>
        <authorList>
            <person name="Stockinger E.J."/>
            <person name="Mao Y."/>
            <person name="Regier M.K."/>
            <person name="Triezenberg S.J."/>
            <person name="Thomashow M.F."/>
        </authorList>
    </citation>
    <scope>NUCLEOTIDE SEQUENCE [MRNA] (ISOFORM 1)</scope>
    <scope>IDENTIFICATION</scope>
    <scope>TISSUE SPECIFICITY</scope>
    <scope>INTERACTION WITH GCN5 AND DREB1B/CBF1</scope>
</reference>
<reference key="2">
    <citation type="journal article" date="2000" name="Nature">
        <title>Sequence and analysis of chromosome 3 of the plant Arabidopsis thaliana.</title>
        <authorList>
            <person name="Salanoubat M."/>
            <person name="Lemcke K."/>
            <person name="Rieger M."/>
            <person name="Ansorge W."/>
            <person name="Unseld M."/>
            <person name="Fartmann B."/>
            <person name="Valle G."/>
            <person name="Bloecker H."/>
            <person name="Perez-Alonso M."/>
            <person name="Obermaier B."/>
            <person name="Delseny M."/>
            <person name="Boutry M."/>
            <person name="Grivell L.A."/>
            <person name="Mache R."/>
            <person name="Puigdomenech P."/>
            <person name="De Simone V."/>
            <person name="Choisne N."/>
            <person name="Artiguenave F."/>
            <person name="Robert C."/>
            <person name="Brottier P."/>
            <person name="Wincker P."/>
            <person name="Cattolico L."/>
            <person name="Weissenbach J."/>
            <person name="Saurin W."/>
            <person name="Quetier F."/>
            <person name="Schaefer M."/>
            <person name="Mueller-Auer S."/>
            <person name="Gabel C."/>
            <person name="Fuchs M."/>
            <person name="Benes V."/>
            <person name="Wurmbach E."/>
            <person name="Drzonek H."/>
            <person name="Erfle H."/>
            <person name="Jordan N."/>
            <person name="Bangert S."/>
            <person name="Wiedelmann R."/>
            <person name="Kranz H."/>
            <person name="Voss H."/>
            <person name="Holland R."/>
            <person name="Brandt P."/>
            <person name="Nyakatura G."/>
            <person name="Vezzi A."/>
            <person name="D'Angelo M."/>
            <person name="Pallavicini A."/>
            <person name="Toppo S."/>
            <person name="Simionati B."/>
            <person name="Conrad A."/>
            <person name="Hornischer K."/>
            <person name="Kauer G."/>
            <person name="Loehnert T.-H."/>
            <person name="Nordsiek G."/>
            <person name="Reichelt J."/>
            <person name="Scharfe M."/>
            <person name="Schoen O."/>
            <person name="Bargues M."/>
            <person name="Terol J."/>
            <person name="Climent J."/>
            <person name="Navarro P."/>
            <person name="Collado C."/>
            <person name="Perez-Perez A."/>
            <person name="Ottenwaelder B."/>
            <person name="Duchemin D."/>
            <person name="Cooke R."/>
            <person name="Laudie M."/>
            <person name="Berger-Llauro C."/>
            <person name="Purnelle B."/>
            <person name="Masuy D."/>
            <person name="de Haan M."/>
            <person name="Maarse A.C."/>
            <person name="Alcaraz J.-P."/>
            <person name="Cottet A."/>
            <person name="Casacuberta E."/>
            <person name="Monfort A."/>
            <person name="Argiriou A."/>
            <person name="Flores M."/>
            <person name="Liguori R."/>
            <person name="Vitale D."/>
            <person name="Mannhaupt G."/>
            <person name="Haase D."/>
            <person name="Schoof H."/>
            <person name="Rudd S."/>
            <person name="Zaccaria P."/>
            <person name="Mewes H.-W."/>
            <person name="Mayer K.F.X."/>
            <person name="Kaul S."/>
            <person name="Town C.D."/>
            <person name="Koo H.L."/>
            <person name="Tallon L.J."/>
            <person name="Jenkins J."/>
            <person name="Rooney T."/>
            <person name="Rizzo M."/>
            <person name="Walts A."/>
            <person name="Utterback T."/>
            <person name="Fujii C.Y."/>
            <person name="Shea T.P."/>
            <person name="Creasy T.H."/>
            <person name="Haas B."/>
            <person name="Maiti R."/>
            <person name="Wu D."/>
            <person name="Peterson J."/>
            <person name="Van Aken S."/>
            <person name="Pai G."/>
            <person name="Militscher J."/>
            <person name="Sellers P."/>
            <person name="Gill J.E."/>
            <person name="Feldblyum T.V."/>
            <person name="Preuss D."/>
            <person name="Lin X."/>
            <person name="Nierman W.C."/>
            <person name="Salzberg S.L."/>
            <person name="White O."/>
            <person name="Venter J.C."/>
            <person name="Fraser C.M."/>
            <person name="Kaneko T."/>
            <person name="Nakamura Y."/>
            <person name="Sato S."/>
            <person name="Kato T."/>
            <person name="Asamizu E."/>
            <person name="Sasamoto S."/>
            <person name="Kimura T."/>
            <person name="Idesawa K."/>
            <person name="Kawashima K."/>
            <person name="Kishida Y."/>
            <person name="Kiyokawa C."/>
            <person name="Kohara M."/>
            <person name="Matsumoto M."/>
            <person name="Matsuno A."/>
            <person name="Muraki A."/>
            <person name="Nakayama S."/>
            <person name="Nakazaki N."/>
            <person name="Shinpo S."/>
            <person name="Takeuchi C."/>
            <person name="Wada T."/>
            <person name="Watanabe A."/>
            <person name="Yamada M."/>
            <person name="Yasuda M."/>
            <person name="Tabata S."/>
        </authorList>
    </citation>
    <scope>NUCLEOTIDE SEQUENCE [LARGE SCALE GENOMIC DNA]</scope>
    <source>
        <strain>cv. Columbia</strain>
    </source>
</reference>
<reference key="3">
    <citation type="journal article" date="2017" name="Plant J.">
        <title>Araport11: a complete reannotation of the Arabidopsis thaliana reference genome.</title>
        <authorList>
            <person name="Cheng C.Y."/>
            <person name="Krishnakumar V."/>
            <person name="Chan A.P."/>
            <person name="Thibaud-Nissen F."/>
            <person name="Schobel S."/>
            <person name="Town C.D."/>
        </authorList>
    </citation>
    <scope>GENOME REANNOTATION</scope>
    <source>
        <strain>cv. Columbia</strain>
    </source>
</reference>
<reference key="4">
    <citation type="journal article" date="2003" name="Science">
        <title>Empirical analysis of transcriptional activity in the Arabidopsis genome.</title>
        <authorList>
            <person name="Yamada K."/>
            <person name="Lim J."/>
            <person name="Dale J.M."/>
            <person name="Chen H."/>
            <person name="Shinn P."/>
            <person name="Palm C.J."/>
            <person name="Southwick A.M."/>
            <person name="Wu H.C."/>
            <person name="Kim C.J."/>
            <person name="Nguyen M."/>
            <person name="Pham P.K."/>
            <person name="Cheuk R.F."/>
            <person name="Karlin-Newmann G."/>
            <person name="Liu S.X."/>
            <person name="Lam B."/>
            <person name="Sakano H."/>
            <person name="Wu T."/>
            <person name="Yu G."/>
            <person name="Miranda M."/>
            <person name="Quach H.L."/>
            <person name="Tripp M."/>
            <person name="Chang C.H."/>
            <person name="Lee J.M."/>
            <person name="Toriumi M.J."/>
            <person name="Chan M.M."/>
            <person name="Tang C.C."/>
            <person name="Onodera C.S."/>
            <person name="Deng J.M."/>
            <person name="Akiyama K."/>
            <person name="Ansari Y."/>
            <person name="Arakawa T."/>
            <person name="Banh J."/>
            <person name="Banno F."/>
            <person name="Bowser L."/>
            <person name="Brooks S.Y."/>
            <person name="Carninci P."/>
            <person name="Chao Q."/>
            <person name="Choy N."/>
            <person name="Enju A."/>
            <person name="Goldsmith A.D."/>
            <person name="Gurjal M."/>
            <person name="Hansen N.F."/>
            <person name="Hayashizaki Y."/>
            <person name="Johnson-Hopson C."/>
            <person name="Hsuan V.W."/>
            <person name="Iida K."/>
            <person name="Karnes M."/>
            <person name="Khan S."/>
            <person name="Koesema E."/>
            <person name="Ishida J."/>
            <person name="Jiang P.X."/>
            <person name="Jones T."/>
            <person name="Kawai J."/>
            <person name="Kamiya A."/>
            <person name="Meyers C."/>
            <person name="Nakajima M."/>
            <person name="Narusaka M."/>
            <person name="Seki M."/>
            <person name="Sakurai T."/>
            <person name="Satou M."/>
            <person name="Tamse R."/>
            <person name="Vaysberg M."/>
            <person name="Wallender E.K."/>
            <person name="Wong C."/>
            <person name="Yamamura Y."/>
            <person name="Yuan S."/>
            <person name="Shinozaki K."/>
            <person name="Davis R.W."/>
            <person name="Theologis A."/>
            <person name="Ecker J.R."/>
        </authorList>
    </citation>
    <scope>NUCLEOTIDE SEQUENCE [LARGE SCALE MRNA] (ISOFORM 1)</scope>
    <source>
        <strain>cv. Columbia</strain>
    </source>
</reference>
<reference key="5">
    <citation type="journal article" date="2004" name="Genome Res.">
        <title>Whole genome sequence comparisons and 'full-length' cDNA sequences: a combined approach to evaluate and improve Arabidopsis genome annotation.</title>
        <authorList>
            <person name="Castelli V."/>
            <person name="Aury J.-M."/>
            <person name="Jaillon O."/>
            <person name="Wincker P."/>
            <person name="Clepet C."/>
            <person name="Menard M."/>
            <person name="Cruaud C."/>
            <person name="Quetier F."/>
            <person name="Scarpelli C."/>
            <person name="Schaechter V."/>
            <person name="Temple G."/>
            <person name="Caboche M."/>
            <person name="Weissenbach J."/>
            <person name="Salanoubat M."/>
        </authorList>
    </citation>
    <scope>NUCLEOTIDE SEQUENCE [LARGE SCALE MRNA] (ISOFORM 2)</scope>
    <source>
        <strain>cv. Columbia</strain>
    </source>
</reference>
<reference key="6">
    <citation type="journal article" date="2002" name="Comp. Funct. Genomics">
        <title>REGIA, an EU project on functional genomics of transcription factors from Arabidopsis thaliana.</title>
        <authorList>
            <person name="Paz-Ares J."/>
            <person name="Valencia A."/>
            <person name="Costantino P."/>
            <person name="Vittorioso P."/>
            <person name="Davies B."/>
            <person name="Gilmartin P."/>
            <person name="Giraudat J."/>
            <person name="Parcy F."/>
            <person name="Reindl A."/>
            <person name="Sablowski R."/>
            <person name="Coupland G."/>
            <person name="Martin C."/>
            <person name="Angenent G.C."/>
            <person name="Baeumlein H."/>
            <person name="Mock H.-P."/>
            <person name="Carbonero P."/>
            <person name="Colombo L."/>
            <person name="Tonelli C."/>
            <person name="Engstroem P."/>
            <person name="Droege-Laser W."/>
            <person name="Gatz C."/>
            <person name="Kavanagh T."/>
            <person name="Kushnir S."/>
            <person name="Zabeau M."/>
            <person name="Laux T."/>
            <person name="Hordsworth M."/>
            <person name="Ruberti I."/>
            <person name="Ratcliff F."/>
            <person name="Smeekens S."/>
            <person name="Somssich I."/>
            <person name="Weisshaar B."/>
            <person name="Traas J."/>
        </authorList>
    </citation>
    <scope>NUCLEOTIDE SEQUENCE [LARGE SCALE MRNA] OF 1-306 (ISOFORM 2)</scope>
    <source>
        <strain>cv. Columbia</strain>
    </source>
</reference>
<reference key="7">
    <citation type="journal article" date="2006" name="Biochim. Biophys. Acta">
        <title>Physical and functional interactions of Arabidopsis ADA2 transcriptional coactivator proteins with the acetyltransferase GCN5 and with the cold-induced transcription factor CBF1.</title>
        <authorList>
            <person name="Mao Y."/>
            <person name="Pavangadkar K.A."/>
            <person name="Thomashow M.F."/>
            <person name="Triezenberg S.J."/>
        </authorList>
    </citation>
    <scope>INTERACTION WITH GCN5 AND DREB1B/CBF1</scope>
    <scope>ACETYLATION AT LYS-257</scope>
    <scope>MUTAGENESIS OF LYS-257</scope>
</reference>
<gene>
    <name type="primary">ADA2A</name>
    <name type="synonym">HAC10</name>
    <name type="synonym">HXA02</name>
    <name type="synonym">HXA2</name>
    <name type="ordered locus">At3g07740</name>
    <name type="ORF">F17A17.8</name>
    <name type="ORF">MLP3.19</name>
</gene>
<comment type="function">
    <text evidence="1">Required for the function of some acidic activation domains, which activate transcription from a distant site. The exact mechanism of action is not yet known (By similarity). ADA2 stimulates the acetyltransferase activity of GCN5 on free histones or nucleosomes, probably by opening up the promoter region.</text>
</comment>
<comment type="subunit">
    <text evidence="7 8">Interacts in vitro with the HAT domain of GCN5 and with the DNA-binding domain of the transcriptional activator DREB1B/CBF1.</text>
</comment>
<comment type="interaction">
    <interactant intactId="EBI-979206">
        <id>Q9SFD5</id>
    </interactant>
    <interactant intactId="EBI-9348720">
        <id>Q9SDW0</id>
        <label>GT-3A</label>
    </interactant>
    <organismsDiffer>false</organismsDiffer>
    <experiments>4</experiments>
</comment>
<comment type="interaction">
    <interactant intactId="EBI-979206">
        <id>Q9SFD5</id>
    </interactant>
    <interactant intactId="EBI-979271">
        <id>Q9AR19</id>
        <label>HAG1</label>
    </interactant>
    <organismsDiffer>false</organismsDiffer>
    <experiments>5</experiments>
</comment>
<comment type="interaction">
    <interactant intactId="EBI-979206">
        <id>Q9SFD5</id>
    </interactant>
    <interactant intactId="EBI-4457746">
        <id>Q9LV52</id>
        <label>HSFC1</label>
    </interactant>
    <organismsDiffer>false</organismsDiffer>
    <experiments>5</experiments>
</comment>
<comment type="interaction">
    <interactant intactId="EBI-979206">
        <id>Q9SFD5</id>
    </interactant>
    <interactant intactId="EBI-1238013">
        <id>O22179</id>
        <label>MYB70</label>
    </interactant>
    <organismsDiffer>false</organismsDiffer>
    <experiments>3</experiments>
</comment>
<comment type="interaction">
    <interactant intactId="EBI-979206">
        <id>Q9SFD5</id>
    </interactant>
    <interactant intactId="EBI-2363192">
        <id>Q8S8E3</id>
        <label>PYL6</label>
    </interactant>
    <organismsDiffer>false</organismsDiffer>
    <experiments>3</experiments>
</comment>
<comment type="interaction">
    <interactant intactId="EBI-979206">
        <id>Q9SFD5</id>
    </interactant>
    <interactant intactId="EBI-2349513">
        <id>Q84MC7</id>
        <label>PYL9</label>
    </interactant>
    <organismsDiffer>false</organismsDiffer>
    <experiments>3</experiments>
</comment>
<comment type="interaction">
    <interactant intactId="EBI-979206">
        <id>Q9SFD5</id>
    </interactant>
    <interactant intactId="EBI-4424877">
        <id>Q9S7W5</id>
        <label>TCP13</label>
    </interactant>
    <organismsDiffer>false</organismsDiffer>
    <experiments>4</experiments>
</comment>
<comment type="interaction">
    <interactant intactId="EBI-979206">
        <id>Q9SFD5</id>
    </interactant>
    <interactant intactId="EBI-4424563">
        <id>Q93Z00</id>
        <label>TCP14</label>
    </interactant>
    <organismsDiffer>false</organismsDiffer>
    <experiments>3</experiments>
</comment>
<comment type="subcellular location">
    <subcellularLocation>
        <location evidence="11">Nucleus</location>
    </subcellularLocation>
</comment>
<comment type="alternative products">
    <event type="alternative splicing"/>
    <isoform>
        <id>Q9SFD5-1</id>
        <name>1</name>
        <sequence type="displayed"/>
    </isoform>
    <isoform>
        <id>Q9SFD5-2</id>
        <name>2</name>
        <sequence type="described" ref="VSP_022094"/>
    </isoform>
</comment>
<comment type="tissue specificity">
    <text evidence="7">Expressed in roots and leaves.</text>
</comment>
<comment type="domain">
    <text>The middle domain of ADA2a is sufficient for interaction with the HAT catalytic domain of GCN5.</text>
</comment>
<comment type="PTM">
    <text evidence="1">Acetylated in vitro by GCN5, but acetylation is not essential for biological activity.</text>
</comment>
<comment type="sequence caution" evidence="11">
    <conflict type="erroneous gene model prediction">
        <sequence resource="EMBL-CDS" id="AAF13092"/>
    </conflict>
</comment>
<proteinExistence type="evidence at protein level"/>
<keyword id="KW-0007">Acetylation</keyword>
<keyword id="KW-0025">Alternative splicing</keyword>
<keyword id="KW-0175">Coiled coil</keyword>
<keyword id="KW-0238">DNA-binding</keyword>
<keyword id="KW-0479">Metal-binding</keyword>
<keyword id="KW-0539">Nucleus</keyword>
<keyword id="KW-1185">Reference proteome</keyword>
<keyword id="KW-0804">Transcription</keyword>
<keyword id="KW-0805">Transcription regulation</keyword>
<keyword id="KW-0862">Zinc</keyword>
<keyword id="KW-0863">Zinc-finger</keyword>
<evidence type="ECO:0000250" key="1"/>
<evidence type="ECO:0000255" key="2"/>
<evidence type="ECO:0000255" key="3">
    <source>
        <dbReference type="PROSITE-ProRule" id="PRU00228"/>
    </source>
</evidence>
<evidence type="ECO:0000255" key="4">
    <source>
        <dbReference type="PROSITE-ProRule" id="PRU00247"/>
    </source>
</evidence>
<evidence type="ECO:0000255" key="5">
    <source>
        <dbReference type="PROSITE-ProRule" id="PRU00624"/>
    </source>
</evidence>
<evidence type="ECO:0000256" key="6">
    <source>
        <dbReference type="SAM" id="MobiDB-lite"/>
    </source>
</evidence>
<evidence type="ECO:0000269" key="7">
    <source>
    </source>
</evidence>
<evidence type="ECO:0000269" key="8">
    <source>
    </source>
</evidence>
<evidence type="ECO:0000303" key="9">
    <source>
    </source>
</evidence>
<evidence type="ECO:0000303" key="10">
    <source ref="6"/>
</evidence>
<evidence type="ECO:0000305" key="11"/>
<organism>
    <name type="scientific">Arabidopsis thaliana</name>
    <name type="common">Mouse-ear cress</name>
    <dbReference type="NCBI Taxonomy" id="3702"/>
    <lineage>
        <taxon>Eukaryota</taxon>
        <taxon>Viridiplantae</taxon>
        <taxon>Streptophyta</taxon>
        <taxon>Embryophyta</taxon>
        <taxon>Tracheophyta</taxon>
        <taxon>Spermatophyta</taxon>
        <taxon>Magnoliopsida</taxon>
        <taxon>eudicotyledons</taxon>
        <taxon>Gunneridae</taxon>
        <taxon>Pentapetalae</taxon>
        <taxon>rosids</taxon>
        <taxon>malvids</taxon>
        <taxon>Brassicales</taxon>
        <taxon>Brassicaceae</taxon>
        <taxon>Camelineae</taxon>
        <taxon>Arabidopsis</taxon>
    </lineage>
</organism>
<accession>Q9SFD5</accession>
<accession>Q9SSE2</accession>
<feature type="chain" id="PRO_0000269750" description="Transcriptional adapter ADA2a">
    <location>
        <begin position="1"/>
        <end position="548"/>
    </location>
</feature>
<feature type="domain" description="SANT" evidence="5">
    <location>
        <begin position="106"/>
        <end position="158"/>
    </location>
</feature>
<feature type="domain" description="SWIRM" evidence="4">
    <location>
        <begin position="461"/>
        <end position="548"/>
    </location>
</feature>
<feature type="zinc finger region" description="ZZ-type" evidence="3">
    <location>
        <begin position="48"/>
        <end position="104"/>
    </location>
</feature>
<feature type="region of interest" description="Disordered" evidence="6">
    <location>
        <begin position="1"/>
        <end position="30"/>
    </location>
</feature>
<feature type="coiled-coil region" evidence="2">
    <location>
        <begin position="365"/>
        <end position="386"/>
    </location>
</feature>
<feature type="binding site" evidence="3">
    <location>
        <position position="53"/>
    </location>
    <ligand>
        <name>Zn(2+)</name>
        <dbReference type="ChEBI" id="CHEBI:29105"/>
        <label>1</label>
    </ligand>
</feature>
<feature type="binding site" evidence="3">
    <location>
        <position position="56"/>
    </location>
    <ligand>
        <name>Zn(2+)</name>
        <dbReference type="ChEBI" id="CHEBI:29105"/>
        <label>1</label>
    </ligand>
</feature>
<feature type="binding site" evidence="3">
    <location>
        <position position="68"/>
    </location>
    <ligand>
        <name>Zn(2+)</name>
        <dbReference type="ChEBI" id="CHEBI:29105"/>
        <label>2</label>
    </ligand>
</feature>
<feature type="binding site" evidence="3">
    <location>
        <position position="71"/>
    </location>
    <ligand>
        <name>Zn(2+)</name>
        <dbReference type="ChEBI" id="CHEBI:29105"/>
        <label>2</label>
    </ligand>
</feature>
<feature type="binding site" evidence="3">
    <location>
        <position position="77"/>
    </location>
    <ligand>
        <name>Zn(2+)</name>
        <dbReference type="ChEBI" id="CHEBI:29105"/>
        <label>1</label>
    </ligand>
</feature>
<feature type="binding site" evidence="3">
    <location>
        <position position="80"/>
    </location>
    <ligand>
        <name>Zn(2+)</name>
        <dbReference type="ChEBI" id="CHEBI:29105"/>
        <label>1</label>
    </ligand>
</feature>
<feature type="binding site" evidence="3">
    <location>
        <position position="90"/>
    </location>
    <ligand>
        <name>Zn(2+)</name>
        <dbReference type="ChEBI" id="CHEBI:29105"/>
        <label>2</label>
    </ligand>
</feature>
<feature type="binding site" evidence="3">
    <location>
        <position position="94"/>
    </location>
    <ligand>
        <name>Zn(2+)</name>
        <dbReference type="ChEBI" id="CHEBI:29105"/>
        <label>2</label>
    </ligand>
</feature>
<feature type="modified residue" description="N6-acetyllysine; by GCN5" evidence="8">
    <location>
        <position position="257"/>
    </location>
</feature>
<feature type="splice variant" id="VSP_022094" description="In isoform 2." evidence="9 10">
    <location>
        <begin position="1"/>
        <end position="71"/>
    </location>
</feature>
<feature type="mutagenesis site" description="No phenotypic effect." evidence="8">
    <original>K</original>
    <variation>A</variation>
    <variation>R</variation>
    <location>
        <position position="257"/>
    </location>
</feature>
<protein>
    <recommendedName>
        <fullName>Transcriptional adapter ADA2a</fullName>
        <shortName>AtADA2a</shortName>
    </recommendedName>
</protein>